<name>CE162_RAT</name>
<proteinExistence type="evidence at protein level"/>
<sequence length="1403" mass="161001">MAHYSKVDLDEEFERFMKELSDDSFENSNETPSQPNKDRKKKDTAPWWIAEDGFEDDGLLGTNVSYLKTKKTYQPITDMEEENEKVQFLKSSGTSVLSVDSLEANELVASELHHSTLGLGLDTLEEQEEKEQFFARLEKGLTSSIDYSKLNQELDSDDSAQFRVLHRYQGNVEPAEGGRENESEHKELPETYSDDFEDAEDTDEPLITKDEETRPKENPESGKGSFPNQEEEKTGMLANVVLLDSFDSVEDVDLNNHERPTPKAKALPEMAGGELAETGVSYGQSSGDTEALHQAYHHVAHSLGDTGEPRIEASPGHSVRSSAKDGLQENEESSKNISTTESDLPTVEELMKPIRIDSYGIRGFDLQPVSLQKAVGSKEAESVSSLPLTVNTNTMSQDTRHVSPFPHEQDESVVLHRTAGEGVGSSCPATEEHLDKMYLEILRKKTSVNPSLLPQDNKANQTSRSRLSAREEAPVTSKQVPCKKARSAPPLPRRKPQSGLYASARSSGYSKPSSPLQFFSALEKKTSKDNTKTKNVRPIPTSNQFRKREILSGTKLIKPAALNKPSPHREGSPATPKRPEDPSDDSFVQLQTETLGSYGGNREKELLMLKRAQDAEEKWRGAQALIEQIKMTFSEKEKELENTVESLKRQQERELFKLNQENYILQAKLSSFEETSRKQRWLQFGETSDPLTEEKLKQIQKEIQEQETLLQGYQQENERLYSQVKDLQEQNKKNEERMFKENQNLFSELASLKEQMHKNHFLPQAVENIEPTKNQSFTDLLAELRAAQKEKNHLMEDIKRLKQDKQALEVDLERVKRERDQAKDQIAYTTGEKLYEIKILEETHKQEVSRLQKRLQWYAENQELLDKDAARLREANEETERLKLEIEKLKTESGSPANQQRLRSKERALDAKRIQDLERQVKEMEGILKRRYPNSLPALILAASAAGDSVDRNTVDFMERRIKKLEADLEGKDEEAKKSLRTMEQQFQKMKIQYEQRLEEQEQMLAHRQREAPQNQHNSSSRLKALETELGGIKEAHQITVRKLEAEIDVLKHQNAHLEHKKNDKEDQDLQSIEFQVEQAQARAKLARLNEELAAKGREIQDLTKTVERLQKERRMMLSRQSPRGREEMAAKRLKKEILHPNSGNANAFSETLGAKLYHPHTFTDSHISEVLEENYRLRSELEGLTLEREKLKMESEAAVCQLESSMKRVKDDAAAHIASLKAAHEREIEKLLCQNAVENSSSRVAELNRKIATQEVLLKHFQGQVNELQGKQESLSLSQVREEILQKQITKLLEELKEAKENHTPEMKHFMGLERKIKQMEMRHKQREQELQQIIQQTRQVVETEQNKEVEKWKRLAQLKNRELDKFRTELDSILDVLRELHRQGVVVPVALADEESTAKEF</sequence>
<accession>Q4KLH6</accession>
<organism>
    <name type="scientific">Rattus norvegicus</name>
    <name type="common">Rat</name>
    <dbReference type="NCBI Taxonomy" id="10116"/>
    <lineage>
        <taxon>Eukaryota</taxon>
        <taxon>Metazoa</taxon>
        <taxon>Chordata</taxon>
        <taxon>Craniata</taxon>
        <taxon>Vertebrata</taxon>
        <taxon>Euteleostomi</taxon>
        <taxon>Mammalia</taxon>
        <taxon>Eutheria</taxon>
        <taxon>Euarchontoglires</taxon>
        <taxon>Glires</taxon>
        <taxon>Rodentia</taxon>
        <taxon>Myomorpha</taxon>
        <taxon>Muroidea</taxon>
        <taxon>Muridae</taxon>
        <taxon>Murinae</taxon>
        <taxon>Rattus</taxon>
    </lineage>
</organism>
<reference key="1">
    <citation type="journal article" date="2004" name="Nature">
        <title>Genome sequence of the Brown Norway rat yields insights into mammalian evolution.</title>
        <authorList>
            <person name="Gibbs R.A."/>
            <person name="Weinstock G.M."/>
            <person name="Metzker M.L."/>
            <person name="Muzny D.M."/>
            <person name="Sodergren E.J."/>
            <person name="Scherer S."/>
            <person name="Scott G."/>
            <person name="Steffen D."/>
            <person name="Worley K.C."/>
            <person name="Burch P.E."/>
            <person name="Okwuonu G."/>
            <person name="Hines S."/>
            <person name="Lewis L."/>
            <person name="Deramo C."/>
            <person name="Delgado O."/>
            <person name="Dugan-Rocha S."/>
            <person name="Miner G."/>
            <person name="Morgan M."/>
            <person name="Hawes A."/>
            <person name="Gill R."/>
            <person name="Holt R.A."/>
            <person name="Adams M.D."/>
            <person name="Amanatides P.G."/>
            <person name="Baden-Tillson H."/>
            <person name="Barnstead M."/>
            <person name="Chin S."/>
            <person name="Evans C.A."/>
            <person name="Ferriera S."/>
            <person name="Fosler C."/>
            <person name="Glodek A."/>
            <person name="Gu Z."/>
            <person name="Jennings D."/>
            <person name="Kraft C.L."/>
            <person name="Nguyen T."/>
            <person name="Pfannkoch C.M."/>
            <person name="Sitter C."/>
            <person name="Sutton G.G."/>
            <person name="Venter J.C."/>
            <person name="Woodage T."/>
            <person name="Smith D."/>
            <person name="Lee H.-M."/>
            <person name="Gustafson E."/>
            <person name="Cahill P."/>
            <person name="Kana A."/>
            <person name="Doucette-Stamm L."/>
            <person name="Weinstock K."/>
            <person name="Fechtel K."/>
            <person name="Weiss R.B."/>
            <person name="Dunn D.M."/>
            <person name="Green E.D."/>
            <person name="Blakesley R.W."/>
            <person name="Bouffard G.G."/>
            <person name="De Jong P.J."/>
            <person name="Osoegawa K."/>
            <person name="Zhu B."/>
            <person name="Marra M."/>
            <person name="Schein J."/>
            <person name="Bosdet I."/>
            <person name="Fjell C."/>
            <person name="Jones S."/>
            <person name="Krzywinski M."/>
            <person name="Mathewson C."/>
            <person name="Siddiqui A."/>
            <person name="Wye N."/>
            <person name="McPherson J."/>
            <person name="Zhao S."/>
            <person name="Fraser C.M."/>
            <person name="Shetty J."/>
            <person name="Shatsman S."/>
            <person name="Geer K."/>
            <person name="Chen Y."/>
            <person name="Abramzon S."/>
            <person name="Nierman W.C."/>
            <person name="Havlak P.H."/>
            <person name="Chen R."/>
            <person name="Durbin K.J."/>
            <person name="Egan A."/>
            <person name="Ren Y."/>
            <person name="Song X.-Z."/>
            <person name="Li B."/>
            <person name="Liu Y."/>
            <person name="Qin X."/>
            <person name="Cawley S."/>
            <person name="Cooney A.J."/>
            <person name="D'Souza L.M."/>
            <person name="Martin K."/>
            <person name="Wu J.Q."/>
            <person name="Gonzalez-Garay M.L."/>
            <person name="Jackson A.R."/>
            <person name="Kalafus K.J."/>
            <person name="McLeod M.P."/>
            <person name="Milosavljevic A."/>
            <person name="Virk D."/>
            <person name="Volkov A."/>
            <person name="Wheeler D.A."/>
            <person name="Zhang Z."/>
            <person name="Bailey J.A."/>
            <person name="Eichler E.E."/>
            <person name="Tuzun E."/>
            <person name="Birney E."/>
            <person name="Mongin E."/>
            <person name="Ureta-Vidal A."/>
            <person name="Woodwark C."/>
            <person name="Zdobnov E."/>
            <person name="Bork P."/>
            <person name="Suyama M."/>
            <person name="Torrents D."/>
            <person name="Alexandersson M."/>
            <person name="Trask B.J."/>
            <person name="Young J.M."/>
            <person name="Huang H."/>
            <person name="Wang H."/>
            <person name="Xing H."/>
            <person name="Daniels S."/>
            <person name="Gietzen D."/>
            <person name="Schmidt J."/>
            <person name="Stevens K."/>
            <person name="Vitt U."/>
            <person name="Wingrove J."/>
            <person name="Camara F."/>
            <person name="Mar Alba M."/>
            <person name="Abril J.F."/>
            <person name="Guigo R."/>
            <person name="Smit A."/>
            <person name="Dubchak I."/>
            <person name="Rubin E.M."/>
            <person name="Couronne O."/>
            <person name="Poliakov A."/>
            <person name="Huebner N."/>
            <person name="Ganten D."/>
            <person name="Goesele C."/>
            <person name="Hummel O."/>
            <person name="Kreitler T."/>
            <person name="Lee Y.-A."/>
            <person name="Monti J."/>
            <person name="Schulz H."/>
            <person name="Zimdahl H."/>
            <person name="Himmelbauer H."/>
            <person name="Lehrach H."/>
            <person name="Jacob H.J."/>
            <person name="Bromberg S."/>
            <person name="Gullings-Handley J."/>
            <person name="Jensen-Seaman M.I."/>
            <person name="Kwitek A.E."/>
            <person name="Lazar J."/>
            <person name="Pasko D."/>
            <person name="Tonellato P.J."/>
            <person name="Twigger S."/>
            <person name="Ponting C.P."/>
            <person name="Duarte J.M."/>
            <person name="Rice S."/>
            <person name="Goodstadt L."/>
            <person name="Beatson S.A."/>
            <person name="Emes R.D."/>
            <person name="Winter E.E."/>
            <person name="Webber C."/>
            <person name="Brandt P."/>
            <person name="Nyakatura G."/>
            <person name="Adetobi M."/>
            <person name="Chiaromonte F."/>
            <person name="Elnitski L."/>
            <person name="Eswara P."/>
            <person name="Hardison R.C."/>
            <person name="Hou M."/>
            <person name="Kolbe D."/>
            <person name="Makova K."/>
            <person name="Miller W."/>
            <person name="Nekrutenko A."/>
            <person name="Riemer C."/>
            <person name="Schwartz S."/>
            <person name="Taylor J."/>
            <person name="Yang S."/>
            <person name="Zhang Y."/>
            <person name="Lindpaintner K."/>
            <person name="Andrews T.D."/>
            <person name="Caccamo M."/>
            <person name="Clamp M."/>
            <person name="Clarke L."/>
            <person name="Curwen V."/>
            <person name="Durbin R.M."/>
            <person name="Eyras E."/>
            <person name="Searle S.M."/>
            <person name="Cooper G.M."/>
            <person name="Batzoglou S."/>
            <person name="Brudno M."/>
            <person name="Sidow A."/>
            <person name="Stone E.A."/>
            <person name="Payseur B.A."/>
            <person name="Bourque G."/>
            <person name="Lopez-Otin C."/>
            <person name="Puente X.S."/>
            <person name="Chakrabarti K."/>
            <person name="Chatterji S."/>
            <person name="Dewey C."/>
            <person name="Pachter L."/>
            <person name="Bray N."/>
            <person name="Yap V.B."/>
            <person name="Caspi A."/>
            <person name="Tesler G."/>
            <person name="Pevzner P.A."/>
            <person name="Haussler D."/>
            <person name="Roskin K.M."/>
            <person name="Baertsch R."/>
            <person name="Clawson H."/>
            <person name="Furey T.S."/>
            <person name="Hinrichs A.S."/>
            <person name="Karolchik D."/>
            <person name="Kent W.J."/>
            <person name="Rosenbloom K.R."/>
            <person name="Trumbower H."/>
            <person name="Weirauch M."/>
            <person name="Cooper D.N."/>
            <person name="Stenson P.D."/>
            <person name="Ma B."/>
            <person name="Brent M."/>
            <person name="Arumugam M."/>
            <person name="Shteynberg D."/>
            <person name="Copley R.R."/>
            <person name="Taylor M.S."/>
            <person name="Riethman H."/>
            <person name="Mudunuri U."/>
            <person name="Peterson J."/>
            <person name="Guyer M."/>
            <person name="Felsenfeld A."/>
            <person name="Old S."/>
            <person name="Mockrin S."/>
            <person name="Collins F.S."/>
        </authorList>
    </citation>
    <scope>NUCLEOTIDE SEQUENCE [LARGE SCALE GENOMIC DNA]</scope>
    <source>
        <strain>Brown Norway</strain>
    </source>
</reference>
<reference key="2">
    <citation type="journal article" date="2004" name="Genome Res.">
        <title>The status, quality, and expansion of the NIH full-length cDNA project: the Mammalian Gene Collection (MGC).</title>
        <authorList>
            <consortium name="The MGC Project Team"/>
        </authorList>
    </citation>
    <scope>NUCLEOTIDE SEQUENCE [LARGE SCALE MRNA] (ISOFORM 2)</scope>
    <source>
        <tissue>Thymus</tissue>
    </source>
</reference>
<reference key="3">
    <citation type="journal article" date="2006" name="Oncogene">
        <title>QN1/KIAA1009: a new essential protein for chromosome segregation and mitotic spindle assembly.</title>
        <authorList>
            <person name="Leon A."/>
            <person name="Omri B."/>
            <person name="Gely A."/>
            <person name="Klein C."/>
            <person name="Crisanti P."/>
        </authorList>
    </citation>
    <scope>SUBCELLULAR LOCATION</scope>
    <scope>INTERACTION WITH ALPHA-TUBULIN</scope>
</reference>
<reference key="4">
    <citation type="journal article" date="2012" name="Nat. Commun.">
        <title>Quantitative maps of protein phosphorylation sites across 14 different rat organs and tissues.</title>
        <authorList>
            <person name="Lundby A."/>
            <person name="Secher A."/>
            <person name="Lage K."/>
            <person name="Nordsborg N.B."/>
            <person name="Dmytriyev A."/>
            <person name="Lundby C."/>
            <person name="Olsen J.V."/>
        </authorList>
    </citation>
    <scope>PHOSPHORYLATION [LARGE SCALE ANALYSIS] AT SER-156 AND SER-159</scope>
    <scope>IDENTIFICATION BY MASS SPECTROMETRY [LARGE SCALE ANALYSIS]</scope>
</reference>
<protein>
    <recommendedName>
        <fullName>Centrosomal protein of 162 kDa</fullName>
        <shortName>Cep162</shortName>
    </recommendedName>
    <alternativeName>
        <fullName>Protein QN1 homolog</fullName>
    </alternativeName>
</protein>
<keyword id="KW-0025">Alternative splicing</keyword>
<keyword id="KW-0970">Cilium biogenesis/degradation</keyword>
<keyword id="KW-0175">Coiled coil</keyword>
<keyword id="KW-0963">Cytoplasm</keyword>
<keyword id="KW-0206">Cytoskeleton</keyword>
<keyword id="KW-0493">Microtubule</keyword>
<keyword id="KW-0539">Nucleus</keyword>
<keyword id="KW-0597">Phosphoprotein</keyword>
<keyword id="KW-1185">Reference proteome</keyword>
<gene>
    <name type="primary">Cep162</name>
    <name type="synonym">Qn1</name>
</gene>
<comment type="function">
    <text evidence="1">Required to promote assembly of the transition zone in primary cilia. Acts by specifically recognizing and binding the axonemal microtubule. Localizes to the distal ends of centrioles before ciliogenesis and directly binds to axonemal microtubule, thereby promoting and restricting transition zone formation specifically at the cilia base. Required to mediate CEP290 association with microtubules (By similarity).</text>
</comment>
<comment type="subunit">
    <text evidence="2 3 6">Interacts with alpha-tubulin (PubMed:16302001). Interacts with CPNE4 (By similarity). Interacts with CEP290 (By similarity).</text>
</comment>
<comment type="subcellular location">
    <subcellularLocation>
        <location evidence="1">Cytoplasm</location>
        <location evidence="1">Cytoskeleton</location>
        <location evidence="1">Microtubule organizing center</location>
        <location evidence="1">Centrosome</location>
        <location evidence="1">Centriole</location>
    </subcellularLocation>
    <subcellularLocation>
        <location evidence="6">Cytoplasm</location>
        <location evidence="6">Cytoskeleton</location>
        <location evidence="6">Spindle</location>
    </subcellularLocation>
    <subcellularLocation>
        <location evidence="1">Nucleus</location>
    </subcellularLocation>
    <text evidence="1">Localizes to the distal end of centrioles throughout the cell cycle. During ciliogenesis, found at the cilia base. Localizes to spindle microtubules during mitosis (By similarity).</text>
</comment>
<comment type="alternative products">
    <event type="alternative splicing"/>
    <isoform>
        <id>Q4KLH6-1</id>
        <name>1</name>
        <sequence type="displayed"/>
    </isoform>
    <isoform>
        <id>Q4KLH6-2</id>
        <name>2</name>
        <sequence type="described" ref="VSP_026958 VSP_026959"/>
    </isoform>
</comment>
<comment type="similarity">
    <text evidence="8">Belongs to the CEP162 family.</text>
</comment>
<comment type="caution">
    <text evidence="9">Was initially thought to regulate chromosome segregation and mitotic spindle assembly (PubMed:16302001). However, it was later shown that its absence neither affect mitosis nor centriole duplication.</text>
</comment>
<feature type="chain" id="PRO_0000295630" description="Centrosomal protein of 162 kDa">
    <location>
        <begin position="1"/>
        <end position="1403"/>
    </location>
</feature>
<feature type="region of interest" description="Disordered" evidence="5">
    <location>
        <begin position="19"/>
        <end position="44"/>
    </location>
</feature>
<feature type="region of interest" description="Disordered" evidence="5">
    <location>
        <begin position="171"/>
        <end position="235"/>
    </location>
</feature>
<feature type="region of interest" description="Disordered" evidence="5">
    <location>
        <begin position="305"/>
        <end position="342"/>
    </location>
</feature>
<feature type="region of interest" description="Disordered" evidence="5">
    <location>
        <begin position="449"/>
        <end position="586"/>
    </location>
</feature>
<feature type="coiled-coil region" evidence="4">
    <location>
        <begin position="610"/>
        <end position="1120"/>
    </location>
</feature>
<feature type="coiled-coil region" evidence="4">
    <location>
        <begin position="1170"/>
        <end position="1205"/>
    </location>
</feature>
<feature type="coiled-coil region" evidence="4">
    <location>
        <begin position="1234"/>
        <end position="1385"/>
    </location>
</feature>
<feature type="compositionally biased region" description="Polar residues" evidence="5">
    <location>
        <begin position="26"/>
        <end position="35"/>
    </location>
</feature>
<feature type="compositionally biased region" description="Basic and acidic residues" evidence="5">
    <location>
        <begin position="176"/>
        <end position="189"/>
    </location>
</feature>
<feature type="compositionally biased region" description="Acidic residues" evidence="5">
    <location>
        <begin position="192"/>
        <end position="204"/>
    </location>
</feature>
<feature type="compositionally biased region" description="Basic and acidic residues" evidence="5">
    <location>
        <begin position="206"/>
        <end position="220"/>
    </location>
</feature>
<feature type="compositionally biased region" description="Polar residues" evidence="5">
    <location>
        <begin position="449"/>
        <end position="466"/>
    </location>
</feature>
<feature type="compositionally biased region" description="Basic residues" evidence="5">
    <location>
        <begin position="481"/>
        <end position="496"/>
    </location>
</feature>
<feature type="compositionally biased region" description="Polar residues" evidence="5">
    <location>
        <begin position="504"/>
        <end position="517"/>
    </location>
</feature>
<feature type="compositionally biased region" description="Basic and acidic residues" evidence="5">
    <location>
        <begin position="522"/>
        <end position="532"/>
    </location>
</feature>
<feature type="compositionally biased region" description="Basic and acidic residues" evidence="5">
    <location>
        <begin position="567"/>
        <end position="581"/>
    </location>
</feature>
<feature type="modified residue" description="Phosphoserine" evidence="10">
    <location>
        <position position="156"/>
    </location>
</feature>
<feature type="modified residue" description="Phosphoserine" evidence="10">
    <location>
        <position position="159"/>
    </location>
</feature>
<feature type="modified residue" description="Phosphoserine" evidence="2">
    <location>
        <position position="468"/>
    </location>
</feature>
<feature type="splice variant" id="VSP_026958" description="In isoform 2." evidence="7">
    <location>
        <begin position="1"/>
        <end position="1187"/>
    </location>
</feature>
<feature type="splice variant" id="VSP_026959" description="In isoform 2." evidence="7">
    <original>EREKLKMESEAAVCQLESSMK</original>
    <variation>MCGPPELRECEPLSMLSCVCP</variation>
    <location>
        <begin position="1188"/>
        <end position="1208"/>
    </location>
</feature>
<dbReference type="EMBL" id="AABR03063564">
    <property type="status" value="NOT_ANNOTATED_CDS"/>
    <property type="molecule type" value="Genomic_DNA"/>
</dbReference>
<dbReference type="EMBL" id="AABR03063586">
    <property type="status" value="NOT_ANNOTATED_CDS"/>
    <property type="molecule type" value="Genomic_DNA"/>
</dbReference>
<dbReference type="EMBL" id="AABR03063843">
    <property type="status" value="NOT_ANNOTATED_CDS"/>
    <property type="molecule type" value="Genomic_DNA"/>
</dbReference>
<dbReference type="EMBL" id="BC099201">
    <property type="protein sequence ID" value="AAH99201.1"/>
    <property type="molecule type" value="mRNA"/>
</dbReference>
<dbReference type="RefSeq" id="NP_001263989.1">
    <molecule id="Q4KLH6-1"/>
    <property type="nucleotide sequence ID" value="NM_001277060.1"/>
</dbReference>
<dbReference type="RefSeq" id="XP_006243537.1">
    <molecule id="Q4KLH6-1"/>
    <property type="nucleotide sequence ID" value="XM_006243475.5"/>
</dbReference>
<dbReference type="SMR" id="Q4KLH6"/>
<dbReference type="BioGRID" id="256747">
    <property type="interactions" value="1"/>
</dbReference>
<dbReference type="FunCoup" id="Q4KLH6">
    <property type="interactions" value="2199"/>
</dbReference>
<dbReference type="STRING" id="10116.ENSRNOP00000014165"/>
<dbReference type="iPTMnet" id="Q4KLH6"/>
<dbReference type="PhosphoSitePlus" id="Q4KLH6"/>
<dbReference type="PaxDb" id="10116-ENSRNOP00000014165"/>
<dbReference type="Ensembl" id="ENSRNOT00000014165.7">
    <molecule id="Q4KLH6-1"/>
    <property type="protein sequence ID" value="ENSRNOP00000014165.5"/>
    <property type="gene ID" value="ENSRNOG00000010608.7"/>
</dbReference>
<dbReference type="GeneID" id="300880"/>
<dbReference type="KEGG" id="rno:300880"/>
<dbReference type="UCSC" id="RGD:1307365">
    <molecule id="Q4KLH6-1"/>
    <property type="organism name" value="rat"/>
</dbReference>
<dbReference type="AGR" id="RGD:1307365"/>
<dbReference type="CTD" id="22832"/>
<dbReference type="RGD" id="1307365">
    <property type="gene designation" value="Cep162"/>
</dbReference>
<dbReference type="eggNOG" id="ENOG502QSPF">
    <property type="taxonomic scope" value="Eukaryota"/>
</dbReference>
<dbReference type="GeneTree" id="ENSGT00390000009631"/>
<dbReference type="HOGENOM" id="CLU_005179_0_0_1"/>
<dbReference type="InParanoid" id="Q4KLH6"/>
<dbReference type="OMA" id="PDMTDNE"/>
<dbReference type="OrthoDB" id="89708at9989"/>
<dbReference type="PhylomeDB" id="Q4KLH6"/>
<dbReference type="TreeFam" id="TF330884"/>
<dbReference type="Reactome" id="R-RNO-5620912">
    <property type="pathway name" value="Anchoring of the basal body to the plasma membrane"/>
</dbReference>
<dbReference type="PRO" id="PR:Q4KLH6"/>
<dbReference type="Proteomes" id="UP000002494">
    <property type="component" value="Chromosome 8"/>
</dbReference>
<dbReference type="Bgee" id="ENSRNOG00000010608">
    <property type="expression patterns" value="Expressed in thymus and 19 other cell types or tissues"/>
</dbReference>
<dbReference type="GO" id="GO:0005879">
    <property type="term" value="C:axonemal microtubule"/>
    <property type="evidence" value="ECO:0000250"/>
    <property type="project" value="UniProtKB"/>
</dbReference>
<dbReference type="GO" id="GO:0034451">
    <property type="term" value="C:centriolar satellite"/>
    <property type="evidence" value="ECO:0000318"/>
    <property type="project" value="GO_Central"/>
</dbReference>
<dbReference type="GO" id="GO:0005814">
    <property type="term" value="C:centriole"/>
    <property type="evidence" value="ECO:0000250"/>
    <property type="project" value="UniProtKB"/>
</dbReference>
<dbReference type="GO" id="GO:0005813">
    <property type="term" value="C:centrosome"/>
    <property type="evidence" value="ECO:0000266"/>
    <property type="project" value="RGD"/>
</dbReference>
<dbReference type="GO" id="GO:0036064">
    <property type="term" value="C:ciliary basal body"/>
    <property type="evidence" value="ECO:0007669"/>
    <property type="project" value="Ensembl"/>
</dbReference>
<dbReference type="GO" id="GO:0005829">
    <property type="term" value="C:cytosol"/>
    <property type="evidence" value="ECO:0007669"/>
    <property type="project" value="Ensembl"/>
</dbReference>
<dbReference type="GO" id="GO:0005794">
    <property type="term" value="C:Golgi apparatus"/>
    <property type="evidence" value="ECO:0007669"/>
    <property type="project" value="Ensembl"/>
</dbReference>
<dbReference type="GO" id="GO:0005654">
    <property type="term" value="C:nucleoplasm"/>
    <property type="evidence" value="ECO:0000318"/>
    <property type="project" value="GO_Central"/>
</dbReference>
<dbReference type="GO" id="GO:0005819">
    <property type="term" value="C:spindle"/>
    <property type="evidence" value="ECO:0007669"/>
    <property type="project" value="UniProtKB-SubCell"/>
</dbReference>
<dbReference type="GO" id="GO:0060271">
    <property type="term" value="P:cilium assembly"/>
    <property type="evidence" value="ECO:0000250"/>
    <property type="project" value="UniProtKB"/>
</dbReference>
<dbReference type="InterPro" id="IPR038774">
    <property type="entry name" value="CEP162-like"/>
</dbReference>
<dbReference type="PANTHER" id="PTHR34031">
    <property type="entry name" value="CENTROSOMAL PROTEIN OF 162 KDA"/>
    <property type="match status" value="1"/>
</dbReference>
<dbReference type="PANTHER" id="PTHR34031:SF1">
    <property type="entry name" value="CENTROSOMAL PROTEIN OF 162 KDA"/>
    <property type="match status" value="1"/>
</dbReference>
<evidence type="ECO:0000250" key="1"/>
<evidence type="ECO:0000250" key="2">
    <source>
        <dbReference type="UniProtKB" id="Q5TB80"/>
    </source>
</evidence>
<evidence type="ECO:0000250" key="3">
    <source>
        <dbReference type="UniProtKB" id="Q6ZQ06"/>
    </source>
</evidence>
<evidence type="ECO:0000255" key="4"/>
<evidence type="ECO:0000256" key="5">
    <source>
        <dbReference type="SAM" id="MobiDB-lite"/>
    </source>
</evidence>
<evidence type="ECO:0000269" key="6">
    <source>
    </source>
</evidence>
<evidence type="ECO:0000303" key="7">
    <source>
    </source>
</evidence>
<evidence type="ECO:0000305" key="8"/>
<evidence type="ECO:0000305" key="9">
    <source>
    </source>
</evidence>
<evidence type="ECO:0007744" key="10">
    <source>
    </source>
</evidence>